<name>HIS6_HALH5</name>
<gene>
    <name type="primary">hisF</name>
    <name type="ordered locus">BH3578</name>
</gene>
<accession>Q9K6Z6</accession>
<organism>
    <name type="scientific">Halalkalibacterium halodurans (strain ATCC BAA-125 / DSM 18197 / FERM 7344 / JCM 9153 / C-125)</name>
    <name type="common">Bacillus halodurans</name>
    <dbReference type="NCBI Taxonomy" id="272558"/>
    <lineage>
        <taxon>Bacteria</taxon>
        <taxon>Bacillati</taxon>
        <taxon>Bacillota</taxon>
        <taxon>Bacilli</taxon>
        <taxon>Bacillales</taxon>
        <taxon>Bacillaceae</taxon>
        <taxon>Halalkalibacterium (ex Joshi et al. 2022)</taxon>
    </lineage>
</organism>
<keyword id="KW-0028">Amino-acid biosynthesis</keyword>
<keyword id="KW-0963">Cytoplasm</keyword>
<keyword id="KW-0368">Histidine biosynthesis</keyword>
<keyword id="KW-0456">Lyase</keyword>
<keyword id="KW-1185">Reference proteome</keyword>
<sequence length="252" mass="27089">MLTKRIIPCLDVKDGRVVKGVQFVDLRDAGDPVELAAFYDEQGADELVFLDISASHEGRETMIDVVEKVAGTLAIPFTVGGGINSLEDMKRVLRAGADKVSLNTAAVTRPELITEGADYFGSQCIVVAIDAKYDEALGSWRIYTHGGRTPTEWEVCDWAREAVRRGAGEILLTSMDQDGAKTGFDLALTTKVSEAVSVPVIASGGAGAKEDFVDVFMNAYADAALAASIFHYKETSVAEVKTHLREEGVAVR</sequence>
<protein>
    <recommendedName>
        <fullName>Imidazole glycerol phosphate synthase subunit HisF</fullName>
        <ecNumber>4.3.2.10</ecNumber>
    </recommendedName>
    <alternativeName>
        <fullName>IGP synthase cyclase subunit</fullName>
    </alternativeName>
    <alternativeName>
        <fullName>IGP synthase subunit HisF</fullName>
    </alternativeName>
    <alternativeName>
        <fullName>ImGP synthase subunit HisF</fullName>
        <shortName>IGPS subunit HisF</shortName>
    </alternativeName>
</protein>
<feature type="chain" id="PRO_0000142116" description="Imidazole glycerol phosphate synthase subunit HisF">
    <location>
        <begin position="1"/>
        <end position="252"/>
    </location>
</feature>
<feature type="active site" evidence="2">
    <location>
        <position position="11"/>
    </location>
</feature>
<feature type="active site" evidence="2">
    <location>
        <position position="130"/>
    </location>
</feature>
<reference key="1">
    <citation type="journal article" date="2000" name="Nucleic Acids Res.">
        <title>Complete genome sequence of the alkaliphilic bacterium Bacillus halodurans and genomic sequence comparison with Bacillus subtilis.</title>
        <authorList>
            <person name="Takami H."/>
            <person name="Nakasone K."/>
            <person name="Takaki Y."/>
            <person name="Maeno G."/>
            <person name="Sasaki R."/>
            <person name="Masui N."/>
            <person name="Fuji F."/>
            <person name="Hirama C."/>
            <person name="Nakamura Y."/>
            <person name="Ogasawara N."/>
            <person name="Kuhara S."/>
            <person name="Horikoshi K."/>
        </authorList>
    </citation>
    <scope>NUCLEOTIDE SEQUENCE [LARGE SCALE GENOMIC DNA]</scope>
    <source>
        <strain>ATCC BAA-125 / DSM 18197 / FERM 7344 / JCM 9153 / C-125</strain>
    </source>
</reference>
<proteinExistence type="inferred from homology"/>
<dbReference type="EC" id="4.3.2.10"/>
<dbReference type="EMBL" id="BA000004">
    <property type="protein sequence ID" value="BAB07297.1"/>
    <property type="molecule type" value="Genomic_DNA"/>
</dbReference>
<dbReference type="PIR" id="B84097">
    <property type="entry name" value="B84097"/>
</dbReference>
<dbReference type="RefSeq" id="WP_010899706.1">
    <property type="nucleotide sequence ID" value="NC_002570.2"/>
</dbReference>
<dbReference type="SMR" id="Q9K6Z6"/>
<dbReference type="STRING" id="272558.gene:10729491"/>
<dbReference type="KEGG" id="bha:BH3578"/>
<dbReference type="eggNOG" id="COG0107">
    <property type="taxonomic scope" value="Bacteria"/>
</dbReference>
<dbReference type="HOGENOM" id="CLU_048577_4_0_9"/>
<dbReference type="OrthoDB" id="9781903at2"/>
<dbReference type="UniPathway" id="UPA00031">
    <property type="reaction ID" value="UER00010"/>
</dbReference>
<dbReference type="Proteomes" id="UP000001258">
    <property type="component" value="Chromosome"/>
</dbReference>
<dbReference type="GO" id="GO:0005737">
    <property type="term" value="C:cytoplasm"/>
    <property type="evidence" value="ECO:0007669"/>
    <property type="project" value="UniProtKB-SubCell"/>
</dbReference>
<dbReference type="GO" id="GO:0000107">
    <property type="term" value="F:imidazoleglycerol-phosphate synthase activity"/>
    <property type="evidence" value="ECO:0007669"/>
    <property type="project" value="UniProtKB-UniRule"/>
</dbReference>
<dbReference type="GO" id="GO:0016829">
    <property type="term" value="F:lyase activity"/>
    <property type="evidence" value="ECO:0007669"/>
    <property type="project" value="UniProtKB-KW"/>
</dbReference>
<dbReference type="GO" id="GO:0000105">
    <property type="term" value="P:L-histidine biosynthetic process"/>
    <property type="evidence" value="ECO:0007669"/>
    <property type="project" value="UniProtKB-UniRule"/>
</dbReference>
<dbReference type="CDD" id="cd04731">
    <property type="entry name" value="HisF"/>
    <property type="match status" value="1"/>
</dbReference>
<dbReference type="FunFam" id="3.20.20.70:FF:000006">
    <property type="entry name" value="Imidazole glycerol phosphate synthase subunit HisF"/>
    <property type="match status" value="1"/>
</dbReference>
<dbReference type="Gene3D" id="3.20.20.70">
    <property type="entry name" value="Aldolase class I"/>
    <property type="match status" value="1"/>
</dbReference>
<dbReference type="HAMAP" id="MF_01013">
    <property type="entry name" value="HisF"/>
    <property type="match status" value="1"/>
</dbReference>
<dbReference type="InterPro" id="IPR013785">
    <property type="entry name" value="Aldolase_TIM"/>
</dbReference>
<dbReference type="InterPro" id="IPR006062">
    <property type="entry name" value="His_biosynth"/>
</dbReference>
<dbReference type="InterPro" id="IPR004651">
    <property type="entry name" value="HisF"/>
</dbReference>
<dbReference type="InterPro" id="IPR050064">
    <property type="entry name" value="IGPS_HisA/HisF"/>
</dbReference>
<dbReference type="InterPro" id="IPR011060">
    <property type="entry name" value="RibuloseP-bd_barrel"/>
</dbReference>
<dbReference type="NCBIfam" id="TIGR00735">
    <property type="entry name" value="hisF"/>
    <property type="match status" value="1"/>
</dbReference>
<dbReference type="PANTHER" id="PTHR21235:SF2">
    <property type="entry name" value="IMIDAZOLE GLYCEROL PHOSPHATE SYNTHASE HISHF"/>
    <property type="match status" value="1"/>
</dbReference>
<dbReference type="PANTHER" id="PTHR21235">
    <property type="entry name" value="IMIDAZOLE GLYCEROL PHOSPHATE SYNTHASE SUBUNIT HISF/H IGP SYNTHASE SUBUNIT HISF/H"/>
    <property type="match status" value="1"/>
</dbReference>
<dbReference type="Pfam" id="PF00977">
    <property type="entry name" value="His_biosynth"/>
    <property type="match status" value="1"/>
</dbReference>
<dbReference type="SUPFAM" id="SSF51366">
    <property type="entry name" value="Ribulose-phoshate binding barrel"/>
    <property type="match status" value="1"/>
</dbReference>
<evidence type="ECO:0000250" key="1"/>
<evidence type="ECO:0000255" key="2"/>
<evidence type="ECO:0000305" key="3"/>
<comment type="function">
    <text evidence="1">IGPS catalyzes the conversion of PRFAR and glutamine to IGP, AICAR and glutamate. The HisF subunit catalyzes the cyclization activity that produces IGP and AICAR from PRFAR using the ammonia provided by the HisH subunit (By similarity).</text>
</comment>
<comment type="catalytic activity">
    <reaction>
        <text>5-[(5-phospho-1-deoxy-D-ribulos-1-ylimino)methylamino]-1-(5-phospho-beta-D-ribosyl)imidazole-4-carboxamide + L-glutamine = D-erythro-1-(imidazol-4-yl)glycerol 3-phosphate + 5-amino-1-(5-phospho-beta-D-ribosyl)imidazole-4-carboxamide + L-glutamate + H(+)</text>
        <dbReference type="Rhea" id="RHEA:24793"/>
        <dbReference type="ChEBI" id="CHEBI:15378"/>
        <dbReference type="ChEBI" id="CHEBI:29985"/>
        <dbReference type="ChEBI" id="CHEBI:58278"/>
        <dbReference type="ChEBI" id="CHEBI:58359"/>
        <dbReference type="ChEBI" id="CHEBI:58475"/>
        <dbReference type="ChEBI" id="CHEBI:58525"/>
        <dbReference type="EC" id="4.3.2.10"/>
    </reaction>
</comment>
<comment type="pathway">
    <text>Amino-acid biosynthesis; L-histidine biosynthesis; L-histidine from 5-phospho-alpha-D-ribose 1-diphosphate: step 5/9.</text>
</comment>
<comment type="subunit">
    <text evidence="1">Heterodimer of HisH and HisF.</text>
</comment>
<comment type="subcellular location">
    <subcellularLocation>
        <location evidence="1">Cytoplasm</location>
    </subcellularLocation>
</comment>
<comment type="similarity">
    <text evidence="3">Belongs to the HisA/HisF family.</text>
</comment>